<accession>B8FS83</accession>
<sequence length="106" mass="11155">MIVTTTPNIDGRKIQNYYGIVTGEAIMGANVVRDIFAGITDIIGGRSGAYEEKLQDARQIALKEMEQNAARMGANAVVGVDIDYEVVGQSGSMLMVSASGTAVTVV</sequence>
<protein>
    <recommendedName>
        <fullName evidence="1">UPF0145 protein Dhaf_3855</fullName>
    </recommendedName>
</protein>
<name>Y3855_DESHD</name>
<organism>
    <name type="scientific">Desulfitobacterium hafniense (strain DSM 10664 / DCB-2)</name>
    <dbReference type="NCBI Taxonomy" id="272564"/>
    <lineage>
        <taxon>Bacteria</taxon>
        <taxon>Bacillati</taxon>
        <taxon>Bacillota</taxon>
        <taxon>Clostridia</taxon>
        <taxon>Eubacteriales</taxon>
        <taxon>Desulfitobacteriaceae</taxon>
        <taxon>Desulfitobacterium</taxon>
    </lineage>
</organism>
<gene>
    <name type="ordered locus">Dhaf_3855</name>
</gene>
<evidence type="ECO:0000255" key="1">
    <source>
        <dbReference type="HAMAP-Rule" id="MF_00338"/>
    </source>
</evidence>
<proteinExistence type="inferred from homology"/>
<feature type="chain" id="PRO_1000200227" description="UPF0145 protein Dhaf_3855">
    <location>
        <begin position="1"/>
        <end position="106"/>
    </location>
</feature>
<dbReference type="EMBL" id="CP001336">
    <property type="protein sequence ID" value="ACL21871.1"/>
    <property type="molecule type" value="Genomic_DNA"/>
</dbReference>
<dbReference type="RefSeq" id="WP_005811819.1">
    <property type="nucleotide sequence ID" value="NC_011830.1"/>
</dbReference>
<dbReference type="SMR" id="B8FS83"/>
<dbReference type="KEGG" id="dhd:Dhaf_3855"/>
<dbReference type="HOGENOM" id="CLU_117144_3_2_9"/>
<dbReference type="Proteomes" id="UP000007726">
    <property type="component" value="Chromosome"/>
</dbReference>
<dbReference type="Gene3D" id="3.30.110.70">
    <property type="entry name" value="Hypothetical protein apc22750. Chain B"/>
    <property type="match status" value="1"/>
</dbReference>
<dbReference type="HAMAP" id="MF_00338">
    <property type="entry name" value="UPF0145"/>
    <property type="match status" value="1"/>
</dbReference>
<dbReference type="InterPro" id="IPR035439">
    <property type="entry name" value="UPF0145_dom_sf"/>
</dbReference>
<dbReference type="InterPro" id="IPR002765">
    <property type="entry name" value="UPF0145_YbjQ-like"/>
</dbReference>
<dbReference type="NCBIfam" id="NF002776">
    <property type="entry name" value="PRK02877.1"/>
    <property type="match status" value="1"/>
</dbReference>
<dbReference type="PANTHER" id="PTHR34068">
    <property type="entry name" value="UPF0145 PROTEIN YBJQ"/>
    <property type="match status" value="1"/>
</dbReference>
<dbReference type="PANTHER" id="PTHR34068:SF1">
    <property type="entry name" value="UPF0145 PROTEIN YBJQ"/>
    <property type="match status" value="1"/>
</dbReference>
<dbReference type="Pfam" id="PF01906">
    <property type="entry name" value="YbjQ_1"/>
    <property type="match status" value="1"/>
</dbReference>
<dbReference type="SUPFAM" id="SSF117782">
    <property type="entry name" value="YbjQ-like"/>
    <property type="match status" value="1"/>
</dbReference>
<reference key="1">
    <citation type="journal article" date="2012" name="BMC Microbiol.">
        <title>Genome sequence of Desulfitobacterium hafniense DCB-2, a Gram-positive anaerobe capable of dehalogenation and metal reduction.</title>
        <authorList>
            <person name="Kim S.H."/>
            <person name="Harzman C."/>
            <person name="Davis J.K."/>
            <person name="Hutcheson R."/>
            <person name="Broderick J.B."/>
            <person name="Marsh T.L."/>
            <person name="Tiedje J.M."/>
        </authorList>
    </citation>
    <scope>NUCLEOTIDE SEQUENCE [LARGE SCALE GENOMIC DNA]</scope>
    <source>
        <strain>DSM 10664 / DCB-2</strain>
    </source>
</reference>
<comment type="similarity">
    <text evidence="1">Belongs to the UPF0145 family.</text>
</comment>